<reference key="1">
    <citation type="submission" date="2006-09" db="EMBL/GenBank/DDBJ databases">
        <title>Complete sequence of chromosome 1 of Shewanella sp. ANA-3.</title>
        <authorList>
            <person name="Copeland A."/>
            <person name="Lucas S."/>
            <person name="Lapidus A."/>
            <person name="Barry K."/>
            <person name="Detter J.C."/>
            <person name="Glavina del Rio T."/>
            <person name="Hammon N."/>
            <person name="Israni S."/>
            <person name="Dalin E."/>
            <person name="Tice H."/>
            <person name="Pitluck S."/>
            <person name="Chertkov O."/>
            <person name="Brettin T."/>
            <person name="Bruce D."/>
            <person name="Han C."/>
            <person name="Tapia R."/>
            <person name="Gilna P."/>
            <person name="Schmutz J."/>
            <person name="Larimer F."/>
            <person name="Land M."/>
            <person name="Hauser L."/>
            <person name="Kyrpides N."/>
            <person name="Kim E."/>
            <person name="Newman D."/>
            <person name="Salticov C."/>
            <person name="Konstantinidis K."/>
            <person name="Klappenback J."/>
            <person name="Tiedje J."/>
            <person name="Richardson P."/>
        </authorList>
    </citation>
    <scope>NUCLEOTIDE SEQUENCE [LARGE SCALE GENOMIC DNA]</scope>
    <source>
        <strain>ANA-3</strain>
    </source>
</reference>
<accession>A0KR42</accession>
<dbReference type="EC" id="6.1.1.14" evidence="1"/>
<dbReference type="EMBL" id="CP000469">
    <property type="protein sequence ID" value="ABK46261.1"/>
    <property type="molecule type" value="Genomic_DNA"/>
</dbReference>
<dbReference type="RefSeq" id="WP_011715310.1">
    <property type="nucleotide sequence ID" value="NC_008577.1"/>
</dbReference>
<dbReference type="SMR" id="A0KR42"/>
<dbReference type="STRING" id="94122.Shewana3_0016"/>
<dbReference type="KEGG" id="shn:Shewana3_0016"/>
<dbReference type="eggNOG" id="COG0751">
    <property type="taxonomic scope" value="Bacteria"/>
</dbReference>
<dbReference type="HOGENOM" id="CLU_007220_2_2_6"/>
<dbReference type="OrthoDB" id="9775440at2"/>
<dbReference type="Proteomes" id="UP000002589">
    <property type="component" value="Chromosome"/>
</dbReference>
<dbReference type="GO" id="GO:0005829">
    <property type="term" value="C:cytosol"/>
    <property type="evidence" value="ECO:0007669"/>
    <property type="project" value="TreeGrafter"/>
</dbReference>
<dbReference type="GO" id="GO:0004814">
    <property type="term" value="F:arginine-tRNA ligase activity"/>
    <property type="evidence" value="ECO:0007669"/>
    <property type="project" value="InterPro"/>
</dbReference>
<dbReference type="GO" id="GO:0005524">
    <property type="term" value="F:ATP binding"/>
    <property type="evidence" value="ECO:0007669"/>
    <property type="project" value="UniProtKB-UniRule"/>
</dbReference>
<dbReference type="GO" id="GO:0004820">
    <property type="term" value="F:glycine-tRNA ligase activity"/>
    <property type="evidence" value="ECO:0007669"/>
    <property type="project" value="UniProtKB-UniRule"/>
</dbReference>
<dbReference type="GO" id="GO:0006420">
    <property type="term" value="P:arginyl-tRNA aminoacylation"/>
    <property type="evidence" value="ECO:0007669"/>
    <property type="project" value="InterPro"/>
</dbReference>
<dbReference type="GO" id="GO:0006426">
    <property type="term" value="P:glycyl-tRNA aminoacylation"/>
    <property type="evidence" value="ECO:0007669"/>
    <property type="project" value="UniProtKB-UniRule"/>
</dbReference>
<dbReference type="Gene3D" id="1.10.730.10">
    <property type="entry name" value="Isoleucyl-tRNA Synthetase, Domain 1"/>
    <property type="match status" value="1"/>
</dbReference>
<dbReference type="HAMAP" id="MF_00255">
    <property type="entry name" value="Gly_tRNA_synth_beta"/>
    <property type="match status" value="1"/>
</dbReference>
<dbReference type="InterPro" id="IPR008909">
    <property type="entry name" value="DALR_anticod-bd"/>
</dbReference>
<dbReference type="InterPro" id="IPR015944">
    <property type="entry name" value="Gly-tRNA-synth_bsu"/>
</dbReference>
<dbReference type="InterPro" id="IPR006194">
    <property type="entry name" value="Gly-tRNA-synth_heterodimer"/>
</dbReference>
<dbReference type="NCBIfam" id="TIGR00211">
    <property type="entry name" value="glyS"/>
    <property type="match status" value="1"/>
</dbReference>
<dbReference type="PANTHER" id="PTHR30075:SF2">
    <property type="entry name" value="GLYCINE--TRNA LIGASE, CHLOROPLASTIC_MITOCHONDRIAL 2"/>
    <property type="match status" value="1"/>
</dbReference>
<dbReference type="PANTHER" id="PTHR30075">
    <property type="entry name" value="GLYCYL-TRNA SYNTHETASE"/>
    <property type="match status" value="1"/>
</dbReference>
<dbReference type="Pfam" id="PF05746">
    <property type="entry name" value="DALR_1"/>
    <property type="match status" value="1"/>
</dbReference>
<dbReference type="Pfam" id="PF02092">
    <property type="entry name" value="tRNA_synt_2f"/>
    <property type="match status" value="1"/>
</dbReference>
<dbReference type="PRINTS" id="PR01045">
    <property type="entry name" value="TRNASYNTHGB"/>
</dbReference>
<dbReference type="SMART" id="SM00836">
    <property type="entry name" value="DALR_1"/>
    <property type="match status" value="1"/>
</dbReference>
<dbReference type="SUPFAM" id="SSF109604">
    <property type="entry name" value="HD-domain/PDEase-like"/>
    <property type="match status" value="1"/>
</dbReference>
<dbReference type="PROSITE" id="PS50861">
    <property type="entry name" value="AA_TRNA_LIGASE_II_GLYAB"/>
    <property type="match status" value="1"/>
</dbReference>
<evidence type="ECO:0000255" key="1">
    <source>
        <dbReference type="HAMAP-Rule" id="MF_00255"/>
    </source>
</evidence>
<organism>
    <name type="scientific">Shewanella sp. (strain ANA-3)</name>
    <dbReference type="NCBI Taxonomy" id="94122"/>
    <lineage>
        <taxon>Bacteria</taxon>
        <taxon>Pseudomonadati</taxon>
        <taxon>Pseudomonadota</taxon>
        <taxon>Gammaproteobacteria</taxon>
        <taxon>Alteromonadales</taxon>
        <taxon>Shewanellaceae</taxon>
        <taxon>Shewanella</taxon>
    </lineage>
</organism>
<protein>
    <recommendedName>
        <fullName evidence="1">Glycine--tRNA ligase beta subunit</fullName>
        <ecNumber evidence="1">6.1.1.14</ecNumber>
    </recommendedName>
    <alternativeName>
        <fullName evidence="1">Glycyl-tRNA synthetase beta subunit</fullName>
        <shortName evidence="1">GlyRS</shortName>
    </alternativeName>
</protein>
<feature type="chain" id="PRO_1000006407" description="Glycine--tRNA ligase beta subunit">
    <location>
        <begin position="1"/>
        <end position="688"/>
    </location>
</feature>
<gene>
    <name evidence="1" type="primary">glyS</name>
    <name type="ordered locus">Shewana3_0016</name>
</gene>
<proteinExistence type="inferred from homology"/>
<name>SYGB_SHESA</name>
<keyword id="KW-0030">Aminoacyl-tRNA synthetase</keyword>
<keyword id="KW-0067">ATP-binding</keyword>
<keyword id="KW-0963">Cytoplasm</keyword>
<keyword id="KW-0436">Ligase</keyword>
<keyword id="KW-0547">Nucleotide-binding</keyword>
<keyword id="KW-0648">Protein biosynthesis</keyword>
<sequence>MNFENLLIELGTEELPPKALRKLAESFLANFTEELTKADLAFKSAVWYAAPRRLAINVTELALAQADKIVEKRGPAVSSAFDAEGKPTKAAEGWARGNGITVDQAERLVTDKGEWLVYNAKVEGVETKSLIAAMAQRALDKLPIPKPMRWGSSKTQFIRPVHTATMLLGSELIEGELLGIKSARNVRGHRFMGTGFELDHADNYLTLLKEKGKVIADYESRKALIKADAEKAAAKIGGTADIEDDLLEEVTSLVEWPVVLTASFEEKFLNVPSEALVYTMKGDQKYFPVFDDAGKLLPNFIFVANIESKDPAQIIAGNEKVVRPRLADAEFFFNTDKKHTLESRLPSLETVLFQQQLGTLKDKVTRISALAAFIAEQTGANAVDAARAGLLSKTDLMTNMVMEFTDTQGTMGMHYARLDGETEAVALAMEEQYKPKFSGDTVPTAAVSCAVALADKLDTLVGIFGIGQAPKGAADPFALRRAAIGVLRIIVENKLPLDLVTLIAKAQELHGTNLSNANASDEVLEFLMARFRAWYQDKGIEVDVILAVLARRPTRPADFDSRINAVSHFRSLEASSALAAANKRVSNILAKVEGELPTTINSALLAEAAEQALAAKLAELQPQLAPLFANADYQQALTLLASLRESVDQFFEDVMVMADDEALKNNRLALLNNLREQFLHVADISLLQ</sequence>
<comment type="catalytic activity">
    <reaction evidence="1">
        <text>tRNA(Gly) + glycine + ATP = glycyl-tRNA(Gly) + AMP + diphosphate</text>
        <dbReference type="Rhea" id="RHEA:16013"/>
        <dbReference type="Rhea" id="RHEA-COMP:9664"/>
        <dbReference type="Rhea" id="RHEA-COMP:9683"/>
        <dbReference type="ChEBI" id="CHEBI:30616"/>
        <dbReference type="ChEBI" id="CHEBI:33019"/>
        <dbReference type="ChEBI" id="CHEBI:57305"/>
        <dbReference type="ChEBI" id="CHEBI:78442"/>
        <dbReference type="ChEBI" id="CHEBI:78522"/>
        <dbReference type="ChEBI" id="CHEBI:456215"/>
        <dbReference type="EC" id="6.1.1.14"/>
    </reaction>
</comment>
<comment type="subunit">
    <text evidence="1">Tetramer of two alpha and two beta subunits.</text>
</comment>
<comment type="subcellular location">
    <subcellularLocation>
        <location evidence="1">Cytoplasm</location>
    </subcellularLocation>
</comment>
<comment type="similarity">
    <text evidence="1">Belongs to the class-II aminoacyl-tRNA synthetase family.</text>
</comment>